<evidence type="ECO:0000250" key="1">
    <source>
        <dbReference type="UniProtKB" id="Q8CFE2"/>
    </source>
</evidence>
<evidence type="ECO:0000256" key="2">
    <source>
        <dbReference type="SAM" id="MobiDB-lite"/>
    </source>
</evidence>
<evidence type="ECO:0000269" key="3">
    <source>
    </source>
</evidence>
<evidence type="ECO:0000269" key="4">
    <source>
    </source>
</evidence>
<evidence type="ECO:0000269" key="5">
    <source>
    </source>
</evidence>
<evidence type="ECO:0000269" key="6">
    <source>
    </source>
</evidence>
<evidence type="ECO:0000269" key="7">
    <source>
    </source>
</evidence>
<evidence type="ECO:0000269" key="8">
    <source>
    </source>
</evidence>
<evidence type="ECO:0000269" key="9">
    <source>
    </source>
</evidence>
<evidence type="ECO:0000269" key="10">
    <source>
    </source>
</evidence>
<evidence type="ECO:0000269" key="11">
    <source>
    </source>
</evidence>
<evidence type="ECO:0000269" key="12">
    <source>
    </source>
</evidence>
<evidence type="ECO:0000269" key="13">
    <source>
    </source>
</evidence>
<evidence type="ECO:0000269" key="14">
    <source>
    </source>
</evidence>
<evidence type="ECO:0000269" key="15">
    <source>
    </source>
</evidence>
<evidence type="ECO:0000269" key="16">
    <source>
    </source>
</evidence>
<evidence type="ECO:0000269" key="17">
    <source>
    </source>
</evidence>
<evidence type="ECO:0000269" key="18">
    <source>
    </source>
</evidence>
<evidence type="ECO:0000269" key="19">
    <source>
    </source>
</evidence>
<evidence type="ECO:0000269" key="20">
    <source>
    </source>
</evidence>
<evidence type="ECO:0000269" key="21">
    <source>
    </source>
</evidence>
<evidence type="ECO:0000269" key="22">
    <source>
    </source>
</evidence>
<evidence type="ECO:0000269" key="23">
    <source>
    </source>
</evidence>
<evidence type="ECO:0000303" key="24">
    <source>
    </source>
</evidence>
<evidence type="ECO:0000305" key="25"/>
<evidence type="ECO:0000312" key="26">
    <source>
        <dbReference type="HGNC" id="HGNC:26051"/>
    </source>
</evidence>
<evidence type="ECO:0007744" key="27">
    <source>
        <dbReference type="PDB" id="6M3G"/>
    </source>
</evidence>
<evidence type="ECO:0007744" key="28">
    <source>
        <dbReference type="PDB" id="6M3I"/>
    </source>
</evidence>
<evidence type="ECO:0007744" key="29">
    <source>
        <dbReference type="PDB" id="6TX2"/>
    </source>
</evidence>
<evidence type="ECO:0007744" key="30">
    <source>
        <dbReference type="PDB" id="6TX3"/>
    </source>
</evidence>
<evidence type="ECO:0007744" key="31">
    <source>
        <dbReference type="PDB" id="6X0L"/>
    </source>
</evidence>
<evidence type="ECO:0007744" key="32">
    <source>
        <dbReference type="PDB" id="6X0M"/>
    </source>
</evidence>
<evidence type="ECO:0007744" key="33">
    <source>
        <dbReference type="PDB" id="6X0N"/>
    </source>
</evidence>
<evidence type="ECO:0007744" key="34">
    <source>
    </source>
</evidence>
<evidence type="ECO:0007744" key="35">
    <source>
    </source>
</evidence>
<evidence type="ECO:0007829" key="36">
    <source>
        <dbReference type="PDB" id="6M3G"/>
    </source>
</evidence>
<evidence type="ECO:0007829" key="37">
    <source>
        <dbReference type="PDB" id="6M3I"/>
    </source>
</evidence>
<evidence type="ECO:0007829" key="38">
    <source>
        <dbReference type="PDB" id="6TX3"/>
    </source>
</evidence>
<comment type="function">
    <text evidence="6 7 8 9 10 11 12 14 15 16 17 18 19 20 21 22 23">Cofactor for serine ADP-ribosylation that confers serine specificity on PARP1 and PARP2 and plays a key role in DNA damage response (PubMed:28190768, PubMed:29480802, PubMed:29954836, PubMed:32028527, PubMed:32939087, PubMed:33186521, PubMed:33589610, PubMed:33683197, PubMed:34108479, PubMed:34210965, PubMed:34486521, PubMed:34625544, PubMed:34732825, PubMed:34795260, PubMed:34874266). Initiates the repair of double-strand DNA breaks: recruited to DNA damage sites by PARP1 and PARP2 and switches the amino acid specificity of PARP1 and PARP2 from aspartate or glutamate to serine residues, licensing serine ADP-ribosylation of target proteins (PubMed:28190768, PubMed:29480802, PubMed:29954836, PubMed:32028527, PubMed:32939087, PubMed:33589610, PubMed:33683197, PubMed:34486521, PubMed:34625544, PubMed:34732825, PubMed:34795260, PubMed:34874266). Serine ADP-ribosylation of target proteins, such as histones, promotes decompaction of chromatin and the recruitment of repair factors leading to the reparation of DNA strand breaks (PubMed:27067600, PubMed:28190768, PubMed:32939087, PubMed:33589610). Serine ADP-ribosylation of proteins constitutes the primary form of ADP-ribosylation of proteins in response to DNA damage (PubMed:29480802). HPF1 acts by completing the active site of PARP1 and PARP2: forms a composite active site composed of residues from HPF1 and PARP1 or PARP2 (PubMed:32028527, PubMed:33589610). While HPF1 promotes the initiation of serine ADP-ribosylation, it restricts the polymerase activity of PARP1 and PARP2 in order to limit the length of poly-ADP-ribose chains (PubMed:33683197, PubMed:34732825, PubMed:34795260). HPF1 also promotes tyrosine ADP-ribosylation, probably by conferring tyrosine specificity on PARP1 (PubMed:29954836, PubMed:30257210).</text>
</comment>
<comment type="subunit">
    <text evidence="6 11 12 13 15 17">Interacts with PARP1 (via the PARP catalytic domain) (PubMed:27067600, PubMed:32028527, PubMed:33589610). Interacts with PARP2 (via the PARP catalytic domain) (PubMed:27067600, PubMed:32028527, PubMed:32939087, PubMed:33141820, PubMed:34108479). Interacts with core nucleosomes in a PARP1- and PARP2-dependent manner (PubMed:27067600, PubMed:32939087).</text>
</comment>
<comment type="interaction">
    <interactant intactId="EBI-720597">
        <id>Q9NWY4</id>
    </interactant>
    <interactant intactId="EBI-1048053">
        <id>Q9UL63</id>
        <label>MKLN1</label>
    </interactant>
    <organismsDiffer>false</organismsDiffer>
    <experiments>2</experiments>
</comment>
<comment type="subcellular location">
    <subcellularLocation>
        <location evidence="6 12">Chromosome</location>
    </subcellularLocation>
    <subcellularLocation>
        <location evidence="6">Nucleus</location>
    </subcellularLocation>
    <text evidence="6 12">Localizes to DNA damage sites; chromatin localization is dependent on PARP1 and PARP2.</text>
</comment>
<comment type="similarity">
    <text evidence="25">Belongs to the HPF1 family.</text>
</comment>
<comment type="online information" name="Protein Spotlight">
    <link uri="https://www.proteinspotlight.org/back_issues/235/"/>
    <text>Catalysis - Issue 235 of April 2021</text>
</comment>
<protein>
    <recommendedName>
        <fullName evidence="24">Histone PARylation factor 1</fullName>
    </recommendedName>
</protein>
<name>HPF1_HUMAN</name>
<sequence length="346" mass="39436">MVGGGGKRRPGGEGPQCEKTTDVKKSKFCEADVSSDLRKEVENHYKLSLPEDFYHFWKFCEELDPEKPSDSLSASLGLQLVGPYDILAGKHKTKKKSTGLNFNLHWRFYYDPPEFQTIIIGDNKTQYHMGYFRDSPDEFPVYVGINEAKKNCIIVPNGDNVFAAVKLFLTKKLREITDKKKINLLKNIDEKLTEAARELGYSLEQRTVKMKQRDKKVVTKTFHGAGLVVPVDKNDVGYRELPETDADLKRICKTIVEAASDEERLKAFAPIQEMMTFVQFANDECDYGMGLELGMDLFCYGSHYFHKVAGQLLPLAYNLLKRNLFAEIIEEHLANRSQENIDQLAA</sequence>
<keyword id="KW-0002">3D-structure</keyword>
<keyword id="KW-0007">Acetylation</keyword>
<keyword id="KW-0013">ADP-ribosylation</keyword>
<keyword id="KW-0158">Chromosome</keyword>
<keyword id="KW-0227">DNA damage</keyword>
<keyword id="KW-0234">DNA repair</keyword>
<keyword id="KW-0539">Nucleus</keyword>
<keyword id="KW-1267">Proteomics identification</keyword>
<keyword id="KW-1185">Reference proteome</keyword>
<reference key="1">
    <citation type="journal article" date="2001" name="Genome Res.">
        <title>Towards a catalog of human genes and proteins: sequencing and analysis of 500 novel complete protein coding human cDNAs.</title>
        <authorList>
            <person name="Wiemann S."/>
            <person name="Weil B."/>
            <person name="Wellenreuther R."/>
            <person name="Gassenhuber J."/>
            <person name="Glassl S."/>
            <person name="Ansorge W."/>
            <person name="Boecher M."/>
            <person name="Bloecker H."/>
            <person name="Bauersachs S."/>
            <person name="Blum H."/>
            <person name="Lauber J."/>
            <person name="Duesterhoeft A."/>
            <person name="Beyer A."/>
            <person name="Koehrer K."/>
            <person name="Strack N."/>
            <person name="Mewes H.-W."/>
            <person name="Ottenwaelder B."/>
            <person name="Obermaier B."/>
            <person name="Tampe J."/>
            <person name="Heubner D."/>
            <person name="Wambutt R."/>
            <person name="Korn B."/>
            <person name="Klein M."/>
            <person name="Poustka A."/>
        </authorList>
    </citation>
    <scope>NUCLEOTIDE SEQUENCE [LARGE SCALE MRNA]</scope>
    <scope>VARIANT LYS-174</scope>
    <source>
        <tissue>Brain</tissue>
    </source>
</reference>
<reference key="2">
    <citation type="journal article" date="2004" name="Nat. Genet.">
        <title>Complete sequencing and characterization of 21,243 full-length human cDNAs.</title>
        <authorList>
            <person name="Ota T."/>
            <person name="Suzuki Y."/>
            <person name="Nishikawa T."/>
            <person name="Otsuki T."/>
            <person name="Sugiyama T."/>
            <person name="Irie R."/>
            <person name="Wakamatsu A."/>
            <person name="Hayashi K."/>
            <person name="Sato H."/>
            <person name="Nagai K."/>
            <person name="Kimura K."/>
            <person name="Makita H."/>
            <person name="Sekine M."/>
            <person name="Obayashi M."/>
            <person name="Nishi T."/>
            <person name="Shibahara T."/>
            <person name="Tanaka T."/>
            <person name="Ishii S."/>
            <person name="Yamamoto J."/>
            <person name="Saito K."/>
            <person name="Kawai Y."/>
            <person name="Isono Y."/>
            <person name="Nakamura Y."/>
            <person name="Nagahari K."/>
            <person name="Murakami K."/>
            <person name="Yasuda T."/>
            <person name="Iwayanagi T."/>
            <person name="Wagatsuma M."/>
            <person name="Shiratori A."/>
            <person name="Sudo H."/>
            <person name="Hosoiri T."/>
            <person name="Kaku Y."/>
            <person name="Kodaira H."/>
            <person name="Kondo H."/>
            <person name="Sugawara M."/>
            <person name="Takahashi M."/>
            <person name="Kanda K."/>
            <person name="Yokoi T."/>
            <person name="Furuya T."/>
            <person name="Kikkawa E."/>
            <person name="Omura Y."/>
            <person name="Abe K."/>
            <person name="Kamihara K."/>
            <person name="Katsuta N."/>
            <person name="Sato K."/>
            <person name="Tanikawa M."/>
            <person name="Yamazaki M."/>
            <person name="Ninomiya K."/>
            <person name="Ishibashi T."/>
            <person name="Yamashita H."/>
            <person name="Murakawa K."/>
            <person name="Fujimori K."/>
            <person name="Tanai H."/>
            <person name="Kimata M."/>
            <person name="Watanabe M."/>
            <person name="Hiraoka S."/>
            <person name="Chiba Y."/>
            <person name="Ishida S."/>
            <person name="Ono Y."/>
            <person name="Takiguchi S."/>
            <person name="Watanabe S."/>
            <person name="Yosida M."/>
            <person name="Hotuta T."/>
            <person name="Kusano J."/>
            <person name="Kanehori K."/>
            <person name="Takahashi-Fujii A."/>
            <person name="Hara H."/>
            <person name="Tanase T.-O."/>
            <person name="Nomura Y."/>
            <person name="Togiya S."/>
            <person name="Komai F."/>
            <person name="Hara R."/>
            <person name="Takeuchi K."/>
            <person name="Arita M."/>
            <person name="Imose N."/>
            <person name="Musashino K."/>
            <person name="Yuuki H."/>
            <person name="Oshima A."/>
            <person name="Sasaki N."/>
            <person name="Aotsuka S."/>
            <person name="Yoshikawa Y."/>
            <person name="Matsunawa H."/>
            <person name="Ichihara T."/>
            <person name="Shiohata N."/>
            <person name="Sano S."/>
            <person name="Moriya S."/>
            <person name="Momiyama H."/>
            <person name="Satoh N."/>
            <person name="Takami S."/>
            <person name="Terashima Y."/>
            <person name="Suzuki O."/>
            <person name="Nakagawa S."/>
            <person name="Senoh A."/>
            <person name="Mizoguchi H."/>
            <person name="Goto Y."/>
            <person name="Shimizu F."/>
            <person name="Wakebe H."/>
            <person name="Hishigaki H."/>
            <person name="Watanabe T."/>
            <person name="Sugiyama A."/>
            <person name="Takemoto M."/>
            <person name="Kawakami B."/>
            <person name="Yamazaki M."/>
            <person name="Watanabe K."/>
            <person name="Kumagai A."/>
            <person name="Itakura S."/>
            <person name="Fukuzumi Y."/>
            <person name="Fujimori Y."/>
            <person name="Komiyama M."/>
            <person name="Tashiro H."/>
            <person name="Tanigami A."/>
            <person name="Fujiwara T."/>
            <person name="Ono T."/>
            <person name="Yamada K."/>
            <person name="Fujii Y."/>
            <person name="Ozaki K."/>
            <person name="Hirao M."/>
            <person name="Ohmori Y."/>
            <person name="Kawabata A."/>
            <person name="Hikiji T."/>
            <person name="Kobatake N."/>
            <person name="Inagaki H."/>
            <person name="Ikema Y."/>
            <person name="Okamoto S."/>
            <person name="Okitani R."/>
            <person name="Kawakami T."/>
            <person name="Noguchi S."/>
            <person name="Itoh T."/>
            <person name="Shigeta K."/>
            <person name="Senba T."/>
            <person name="Matsumura K."/>
            <person name="Nakajima Y."/>
            <person name="Mizuno T."/>
            <person name="Morinaga M."/>
            <person name="Sasaki M."/>
            <person name="Togashi T."/>
            <person name="Oyama M."/>
            <person name="Hata H."/>
            <person name="Watanabe M."/>
            <person name="Komatsu T."/>
            <person name="Mizushima-Sugano J."/>
            <person name="Satoh T."/>
            <person name="Shirai Y."/>
            <person name="Takahashi Y."/>
            <person name="Nakagawa K."/>
            <person name="Okumura K."/>
            <person name="Nagase T."/>
            <person name="Nomura N."/>
            <person name="Kikuchi H."/>
            <person name="Masuho Y."/>
            <person name="Yamashita R."/>
            <person name="Nakai K."/>
            <person name="Yada T."/>
            <person name="Nakamura Y."/>
            <person name="Ohara O."/>
            <person name="Isogai T."/>
            <person name="Sugano S."/>
        </authorList>
    </citation>
    <scope>NUCLEOTIDE SEQUENCE [LARGE SCALE MRNA]</scope>
    <scope>VARIANT LYS-174</scope>
</reference>
<reference key="3">
    <citation type="journal article" date="2005" name="Nature">
        <title>Generation and annotation of the DNA sequences of human chromosomes 2 and 4.</title>
        <authorList>
            <person name="Hillier L.W."/>
            <person name="Graves T.A."/>
            <person name="Fulton R.S."/>
            <person name="Fulton L.A."/>
            <person name="Pepin K.H."/>
            <person name="Minx P."/>
            <person name="Wagner-McPherson C."/>
            <person name="Layman D."/>
            <person name="Wylie K."/>
            <person name="Sekhon M."/>
            <person name="Becker M.C."/>
            <person name="Fewell G.A."/>
            <person name="Delehaunty K.D."/>
            <person name="Miner T.L."/>
            <person name="Nash W.E."/>
            <person name="Kremitzki C."/>
            <person name="Oddy L."/>
            <person name="Du H."/>
            <person name="Sun H."/>
            <person name="Bradshaw-Cordum H."/>
            <person name="Ali J."/>
            <person name="Carter J."/>
            <person name="Cordes M."/>
            <person name="Harris A."/>
            <person name="Isak A."/>
            <person name="van Brunt A."/>
            <person name="Nguyen C."/>
            <person name="Du F."/>
            <person name="Courtney L."/>
            <person name="Kalicki J."/>
            <person name="Ozersky P."/>
            <person name="Abbott S."/>
            <person name="Armstrong J."/>
            <person name="Belter E.A."/>
            <person name="Caruso L."/>
            <person name="Cedroni M."/>
            <person name="Cotton M."/>
            <person name="Davidson T."/>
            <person name="Desai A."/>
            <person name="Elliott G."/>
            <person name="Erb T."/>
            <person name="Fronick C."/>
            <person name="Gaige T."/>
            <person name="Haakenson W."/>
            <person name="Haglund K."/>
            <person name="Holmes A."/>
            <person name="Harkins R."/>
            <person name="Kim K."/>
            <person name="Kruchowski S.S."/>
            <person name="Strong C.M."/>
            <person name="Grewal N."/>
            <person name="Goyea E."/>
            <person name="Hou S."/>
            <person name="Levy A."/>
            <person name="Martinka S."/>
            <person name="Mead K."/>
            <person name="McLellan M.D."/>
            <person name="Meyer R."/>
            <person name="Randall-Maher J."/>
            <person name="Tomlinson C."/>
            <person name="Dauphin-Kohlberg S."/>
            <person name="Kozlowicz-Reilly A."/>
            <person name="Shah N."/>
            <person name="Swearengen-Shahid S."/>
            <person name="Snider J."/>
            <person name="Strong J.T."/>
            <person name="Thompson J."/>
            <person name="Yoakum M."/>
            <person name="Leonard S."/>
            <person name="Pearman C."/>
            <person name="Trani L."/>
            <person name="Radionenko M."/>
            <person name="Waligorski J.E."/>
            <person name="Wang C."/>
            <person name="Rock S.M."/>
            <person name="Tin-Wollam A.-M."/>
            <person name="Maupin R."/>
            <person name="Latreille P."/>
            <person name="Wendl M.C."/>
            <person name="Yang S.-P."/>
            <person name="Pohl C."/>
            <person name="Wallis J.W."/>
            <person name="Spieth J."/>
            <person name="Bieri T.A."/>
            <person name="Berkowicz N."/>
            <person name="Nelson J.O."/>
            <person name="Osborne J."/>
            <person name="Ding L."/>
            <person name="Meyer R."/>
            <person name="Sabo A."/>
            <person name="Shotland Y."/>
            <person name="Sinha P."/>
            <person name="Wohldmann P.E."/>
            <person name="Cook L.L."/>
            <person name="Hickenbotham M.T."/>
            <person name="Eldred J."/>
            <person name="Williams D."/>
            <person name="Jones T.A."/>
            <person name="She X."/>
            <person name="Ciccarelli F.D."/>
            <person name="Izaurralde E."/>
            <person name="Taylor J."/>
            <person name="Schmutz J."/>
            <person name="Myers R.M."/>
            <person name="Cox D.R."/>
            <person name="Huang X."/>
            <person name="McPherson J.D."/>
            <person name="Mardis E.R."/>
            <person name="Clifton S.W."/>
            <person name="Warren W.C."/>
            <person name="Chinwalla A.T."/>
            <person name="Eddy S.R."/>
            <person name="Marra M.A."/>
            <person name="Ovcharenko I."/>
            <person name="Furey T.S."/>
            <person name="Miller W."/>
            <person name="Eichler E.E."/>
            <person name="Bork P."/>
            <person name="Suyama M."/>
            <person name="Torrents D."/>
            <person name="Waterston R.H."/>
            <person name="Wilson R.K."/>
        </authorList>
    </citation>
    <scope>NUCLEOTIDE SEQUENCE [LARGE SCALE GENOMIC DNA]</scope>
</reference>
<reference key="4">
    <citation type="journal article" date="2004" name="Genome Res.">
        <title>The status, quality, and expansion of the NIH full-length cDNA project: the Mammalian Gene Collection (MGC).</title>
        <authorList>
            <consortium name="The MGC Project Team"/>
        </authorList>
    </citation>
    <scope>NUCLEOTIDE SEQUENCE [LARGE SCALE MRNA]</scope>
    <scope>VARIANT LYS-174</scope>
    <source>
        <tissue>Skin</tissue>
    </source>
</reference>
<reference key="5">
    <citation type="journal article" date="2009" name="Science">
        <title>Lysine acetylation targets protein complexes and co-regulates major cellular functions.</title>
        <authorList>
            <person name="Choudhary C."/>
            <person name="Kumar C."/>
            <person name="Gnad F."/>
            <person name="Nielsen M.L."/>
            <person name="Rehman M."/>
            <person name="Walther T.C."/>
            <person name="Olsen J.V."/>
            <person name="Mann M."/>
        </authorList>
    </citation>
    <scope>ACETYLATION [LARGE SCALE ANALYSIS] AT LYS-186 AND LYS-233</scope>
    <scope>IDENTIFICATION BY MASS SPECTROMETRY [LARGE SCALE ANALYSIS]</scope>
</reference>
<reference key="6">
    <citation type="journal article" date="2011" name="BMC Syst. Biol.">
        <title>Initial characterization of the human central proteome.</title>
        <authorList>
            <person name="Burkard T.R."/>
            <person name="Planyavsky M."/>
            <person name="Kaupe I."/>
            <person name="Breitwieser F.P."/>
            <person name="Buerckstuemmer T."/>
            <person name="Bennett K.L."/>
            <person name="Superti-Furga G."/>
            <person name="Colinge J."/>
        </authorList>
    </citation>
    <scope>IDENTIFICATION BY MASS SPECTROMETRY [LARGE SCALE ANALYSIS]</scope>
</reference>
<reference key="7">
    <citation type="journal article" date="2012" name="Proc. Natl. Acad. Sci. U.S.A.">
        <title>N-terminal acetylome analyses and functional insights of the N-terminal acetyltransferase NatB.</title>
        <authorList>
            <person name="Van Damme P."/>
            <person name="Lasa M."/>
            <person name="Polevoda B."/>
            <person name="Gazquez C."/>
            <person name="Elosegui-Artola A."/>
            <person name="Kim D.S."/>
            <person name="De Juan-Pardo E."/>
            <person name="Demeyer K."/>
            <person name="Hole K."/>
            <person name="Larrea E."/>
            <person name="Timmerman E."/>
            <person name="Prieto J."/>
            <person name="Arnesen T."/>
            <person name="Sherman F."/>
            <person name="Gevaert K."/>
            <person name="Aldabe R."/>
        </authorList>
    </citation>
    <scope>ACETYLATION [LARGE SCALE ANALYSIS] AT MET-1</scope>
    <scope>IDENTIFICATION BY MASS SPECTROMETRY [LARGE SCALE ANALYSIS]</scope>
</reference>
<reference key="8">
    <citation type="journal article" date="2016" name="Mol. Cell">
        <title>HPF1/C4orf27 is a PARP-1-interacting protein that regulates PARP-1 ADP-ribosylation activity.</title>
        <authorList>
            <person name="Gibbs-Seymour I."/>
            <person name="Fontana P."/>
            <person name="Rack J.G."/>
            <person name="Ahel I."/>
        </authorList>
    </citation>
    <scope>FUNCTION</scope>
    <scope>SUBCELLULAR LOCATION</scope>
    <scope>INTERACTION WITH PARP1; PARP2; HISTONE H2A AND HISTONE H3</scope>
    <scope>MUTAGENESIS OF 238-TYR-ARG-239</scope>
</reference>
<reference key="9">
    <citation type="journal article" date="2017" name="Mol. Cell">
        <title>Serine ADP-ribosylation depends on HPF1.</title>
        <authorList>
            <person name="Bonfiglio J.J."/>
            <person name="Fontana P."/>
            <person name="Zhang Q."/>
            <person name="Colby T."/>
            <person name="Gibbs-Seymour I."/>
            <person name="Atanassov I."/>
            <person name="Bartlett E."/>
            <person name="Zaja R."/>
            <person name="Ahel I."/>
            <person name="Matic I."/>
        </authorList>
    </citation>
    <scope>FUNCTION</scope>
    <scope>INTERACTION WITH PARP1 AND PARP2</scope>
    <scope>MUTAGENESIS OF 238-TYR-ARG-239</scope>
</reference>
<reference key="10">
    <citation type="journal article" date="2018" name="Cell Rep.">
        <title>Interplay of histone marks with serine ADP-ribosylation.</title>
        <authorList>
            <person name="Bartlett E."/>
            <person name="Bonfiglio J.J."/>
            <person name="Prokhorova E."/>
            <person name="Colby T."/>
            <person name="Zobel F."/>
            <person name="Ahel I."/>
            <person name="Matic I."/>
        </authorList>
    </citation>
    <scope>FUNCTION</scope>
    <scope>ADP-RIBOSYLATION AT SER-97 AND TYR-238</scope>
    <scope>MUTAGENESIS OF ARG-239</scope>
</reference>
<reference key="11">
    <citation type="journal article" date="2018" name="Elife">
        <title>Serine is the major residue for ADP-ribosylation upon DNA damage.</title>
        <authorList>
            <person name="Palazzo L."/>
            <person name="Leidecker O."/>
            <person name="Prokhorova E."/>
            <person name="Dauben H."/>
            <person name="Matic I."/>
            <person name="Ahel I."/>
        </authorList>
    </citation>
    <scope>FUNCTION</scope>
</reference>
<reference key="12">
    <citation type="journal article" date="2018" name="EMBO Rep.">
        <title>Comprehensive ADP-ribosylome analysis identifies tyrosine as an ADP-ribose acceptor site.</title>
        <authorList>
            <person name="Leslie Pedrioli D.M."/>
            <person name="Leutert M."/>
            <person name="Bilan V."/>
            <person name="Nowak K."/>
            <person name="Gunasekera K."/>
            <person name="Ferrari E."/>
            <person name="Imhof R."/>
            <person name="Malmstroem L."/>
            <person name="Hottiger M.O."/>
        </authorList>
    </citation>
    <scope>FUNCTION</scope>
    <scope>ADP-RIBOSYLATION AT TYR-238</scope>
</reference>
<reference key="13">
    <citation type="journal article" date="2020" name="Cell">
        <title>An HPF1/PARP1-based chemical biology strategy for exploring ADP-ribosylation.</title>
        <authorList>
            <person name="Bonfiglio J.J."/>
            <person name="Leidecker O."/>
            <person name="Dauben H."/>
            <person name="Longarini E.J."/>
            <person name="Colby T."/>
            <person name="San Segundo-Acosta P."/>
            <person name="Perez K.A."/>
            <person name="Matic I."/>
        </authorList>
    </citation>
    <scope>FUNCTION</scope>
</reference>
<reference key="14">
    <citation type="journal article" date="2020" name="PLoS ONE">
        <title>Bridging of nucleosome-proximal DNA double-strand breaks by PARP2 enhances its interaction with HPF1.</title>
        <authorList>
            <person name="Gaullier G."/>
            <person name="Roberts G."/>
            <person name="Muthurajan U.M."/>
            <person name="Bowerman S."/>
            <person name="Rudolph J."/>
            <person name="Mahadevan J."/>
            <person name="Jha A."/>
            <person name="Rae P.S."/>
            <person name="Luger K."/>
        </authorList>
    </citation>
    <scope>INTERACTION WITH PARP2</scope>
</reference>
<reference key="15">
    <citation type="journal article" date="2021" name="Commun. Biol.">
        <title>Dual function of HPF1 in the modulation of PARP1 and PARP2 activities.</title>
        <authorList>
            <person name="Kurgina T.A."/>
            <person name="Moor N.A."/>
            <person name="Kutuzov M.M."/>
            <person name="Naumenko K.N."/>
            <person name="Ukraintsev A.A."/>
            <person name="Lavrik O.I."/>
        </authorList>
    </citation>
    <scope>FUNCTION</scope>
</reference>
<reference key="16">
    <citation type="journal article" date="2021" name="Elife">
        <title>HPF1 and nucleosomes mediate a dramatic switch in activity of PARP1 from polymerase to hydrolase.</title>
        <authorList>
            <person name="Rudolph J."/>
            <person name="Roberts G."/>
            <person name="Muthurajan U.M."/>
            <person name="Luger K."/>
        </authorList>
    </citation>
    <scope>FUNCTION</scope>
    <scope>ACTIVE SITE</scope>
    <scope>MUTAGENESIS OF ASP-283; GLU-284; GLU-292 AND HIS-303</scope>
</reference>
<reference key="17">
    <citation type="journal article" date="2021" name="Elife">
        <title>Structure and dynamics of the chromatin remodeler ALC1 bound to a PARylated nucleosome.</title>
        <authorList>
            <person name="Bacic L."/>
            <person name="Gaullier G."/>
            <person name="Sabantsev A."/>
            <person name="Lehmann L.C."/>
            <person name="Brackmann K."/>
            <person name="Dimakou D."/>
            <person name="Halic M."/>
            <person name="Hewitt G."/>
            <person name="Boulton S.J."/>
            <person name="Deindl S."/>
        </authorList>
    </citation>
    <scope>FUNCTION</scope>
</reference>
<reference key="18">
    <citation type="journal article" date="2021" name="Elife">
        <title>Serine ADP-ribosylation marks nucleosomes for ALC1-dependent chromatin remodeling.</title>
        <authorList>
            <person name="Mohapatra J."/>
            <person name="Tashiro K."/>
            <person name="Beckner R.L."/>
            <person name="Sierra J."/>
            <person name="Kilgore J.A."/>
            <person name="Williams N.S."/>
            <person name="Liszczak G."/>
        </authorList>
    </citation>
    <scope>FUNCTION</scope>
</reference>
<reference key="19">
    <citation type="journal article" date="2021" name="Nat. Commun.">
        <title>Activation of PARP2/ARTD2 by DNA damage induces conformational changes relieving enzyme autoinhibition.</title>
        <authorList>
            <person name="Obaji E."/>
            <person name="Maksimainen M.M."/>
            <person name="Galera-Prat A."/>
            <person name="Lehtioe L."/>
        </authorList>
    </citation>
    <scope>FUNCTION</scope>
    <scope>INTERACTION WITH PARP2</scope>
</reference>
<reference key="20">
    <citation type="journal article" date="2021" name="Nat. Commun.">
        <title>Serine-linked PARP1 auto-modification controls PARP inhibitor response.</title>
        <authorList>
            <person name="Prokhorova E."/>
            <person name="Zobel F."/>
            <person name="Smith R."/>
            <person name="Zentout S."/>
            <person name="Gibbs-Seymour I."/>
            <person name="Schuetzenhofer K."/>
            <person name="Peters A."/>
            <person name="Groslambert J."/>
            <person name="Zorzini V."/>
            <person name="Agnew T."/>
            <person name="Brognard J."/>
            <person name="Nielsen M.L."/>
            <person name="Ahel D."/>
            <person name="Huet S."/>
            <person name="Suskiewicz M.J."/>
            <person name="Ahel I."/>
        </authorList>
    </citation>
    <scope>FUNCTION</scope>
</reference>
<reference key="21">
    <citation type="journal article" date="2021" name="Nat. Commun.">
        <title>The regulatory landscape of the human HPF1- and ARH3-dependent ADP-ribosylome.</title>
        <authorList>
            <person name="Hendriks I.A."/>
            <person name="Buch-Larsen S.C."/>
            <person name="Prokhorova E."/>
            <person name="Elsborg J.D."/>
            <person name="Rebak A.K.L.F.S."/>
            <person name="Zhu K."/>
            <person name="Ahel D."/>
            <person name="Lukas C."/>
            <person name="Ahel I."/>
            <person name="Nielsen M.L."/>
        </authorList>
    </citation>
    <scope>FUNCTION</scope>
</reference>
<reference key="22">
    <citation type="journal article" date="2021" name="Nat. Commun.">
        <title>HPF1 dynamically controls the PARP1/2 balance between initiating and elongating ADP-ribose modifications.</title>
        <authorList>
            <person name="Langelier M.F."/>
            <person name="Billur R."/>
            <person name="Sverzhinsky A."/>
            <person name="Black B.E."/>
            <person name="Pascal J.M."/>
        </authorList>
    </citation>
    <scope>FUNCTION</scope>
</reference>
<reference evidence="29 30" key="23">
    <citation type="journal article" date="2020" name="Nature">
        <title>HPF1 completes the PARP active site for DNA damage-induced ADP-ribosylation.</title>
        <authorList>
            <person name="Suskiewicz M.J."/>
            <person name="Zobel F."/>
            <person name="Ogden T.E.H."/>
            <person name="Fontana P."/>
            <person name="Ariza A."/>
            <person name="Yang J.C."/>
            <person name="Zhu K."/>
            <person name="Bracken L."/>
            <person name="Hawthorne W.J."/>
            <person name="Ahel D."/>
            <person name="Neuhaus D."/>
            <person name="Ahel I."/>
        </authorList>
    </citation>
    <scope>X-RAY CRYSTALLOGRAPHY (2.09 ANGSTROMS) OF 37-346 IN COMPLEX WITH PARP2 AND NUCLEOSOME CORE COMPLEX</scope>
    <scope>FUNCTION</scope>
    <scope>ACTIVE SITE</scope>
    <scope>INTERACTION WITH PARP1 AND PARP2</scope>
    <scope>MUTAGENESIS OF ARG-239; GLU-243; ASP-283; GLU-284 AND ASP-286</scope>
</reference>
<reference evidence="31 32 33" key="24">
    <citation type="journal article" date="2020" name="Nature">
        <title>Bridging of DNA breaks activates PARP2-HPF1 to modify chromatin.</title>
        <authorList>
            <person name="Bilokapic S."/>
            <person name="Suskiewicz M.J."/>
            <person name="Ahel I."/>
            <person name="Halic M."/>
        </authorList>
    </citation>
    <scope>STRUCTURE BY ELECTRON MICROSCOPY (3.90 ANGSTROMS) IN COMPLEX WITH PARP2 AND NUCLEOSOME CORE COMPLEX</scope>
    <scope>FUNCTION</scope>
    <scope>SUBCELLULAR LOCATION</scope>
    <scope>INTERACTION WITH PARP2</scope>
    <scope>MUTAGENESIS OF 149-LYS-LYS-150 AND 179-LYS--LYS-181</scope>
</reference>
<reference evidence="27 28" key="25">
    <citation type="journal article" date="2021" name="Nat. Commun.">
        <title>HPF1 remodels the active site of PARP1 to enable the serine ADP-ribosylation of histones.</title>
        <authorList>
            <person name="Sun F.H."/>
            <person name="Zhao P."/>
            <person name="Zhang N."/>
            <person name="Kong L.L."/>
            <person name="Wong C.C.L."/>
            <person name="Yun C.H."/>
        </authorList>
    </citation>
    <scope>X-RAY CRYSTALLOGRAPHY (1.57 ANGSTROMS) IN COMPLEX WITH PARP1</scope>
    <scope>FUNCTION</scope>
    <scope>INTERACTION WITH PARP1</scope>
    <scope>ACTIVE SITE</scope>
    <scope>ADP-RIBOSYLATION AT ASP-235 AND GLU-240</scope>
    <scope>MUTAGENESIS OF ARG-239; PHE-268; PHE-280; ASP-283; GLU-284; CYS-285 AND LYS-307</scope>
</reference>
<dbReference type="EMBL" id="AL136673">
    <property type="protein sequence ID" value="CAB66608.1"/>
    <property type="molecule type" value="mRNA"/>
</dbReference>
<dbReference type="EMBL" id="AK000541">
    <property type="protein sequence ID" value="BAA91241.1"/>
    <property type="molecule type" value="mRNA"/>
</dbReference>
<dbReference type="EMBL" id="AC106878">
    <property type="status" value="NOT_ANNOTATED_CDS"/>
    <property type="molecule type" value="Genomic_DNA"/>
</dbReference>
<dbReference type="EMBL" id="BC010367">
    <property type="protein sequence ID" value="AAH10367.1"/>
    <property type="molecule type" value="mRNA"/>
</dbReference>
<dbReference type="CCDS" id="CCDS3813.1"/>
<dbReference type="RefSeq" id="NP_060337.2">
    <property type="nucleotide sequence ID" value="NM_017867.3"/>
</dbReference>
<dbReference type="PDB" id="6M3G">
    <property type="method" value="X-ray"/>
    <property type="resolution" value="1.57 A"/>
    <property type="chains" value="A=1-346"/>
</dbReference>
<dbReference type="PDB" id="6M3I">
    <property type="method" value="X-ray"/>
    <property type="resolution" value="1.98 A"/>
    <property type="chains" value="A=1-346"/>
</dbReference>
<dbReference type="PDB" id="6TX2">
    <property type="method" value="X-ray"/>
    <property type="resolution" value="2.09 A"/>
    <property type="chains" value="A=37-346"/>
</dbReference>
<dbReference type="PDB" id="6TX3">
    <property type="method" value="X-ray"/>
    <property type="resolution" value="2.96 A"/>
    <property type="chains" value="A=37-346"/>
</dbReference>
<dbReference type="PDB" id="6X0L">
    <property type="method" value="EM"/>
    <property type="resolution" value="3.90 A"/>
    <property type="chains" value="O=1-346"/>
</dbReference>
<dbReference type="PDB" id="6X0M">
    <property type="method" value="EM"/>
    <property type="resolution" value="6.30 A"/>
    <property type="chains" value="O/o=1-346"/>
</dbReference>
<dbReference type="PDB" id="6X0N">
    <property type="method" value="EM"/>
    <property type="resolution" value="10.00 A"/>
    <property type="chains" value="O=1-346"/>
</dbReference>
<dbReference type="PDBsum" id="6M3G"/>
<dbReference type="PDBsum" id="6M3I"/>
<dbReference type="PDBsum" id="6TX2"/>
<dbReference type="PDBsum" id="6TX3"/>
<dbReference type="PDBsum" id="6X0L"/>
<dbReference type="PDBsum" id="6X0M"/>
<dbReference type="PDBsum" id="6X0N"/>
<dbReference type="EMDB" id="EMD-21978"/>
<dbReference type="EMDB" id="EMD-21979"/>
<dbReference type="EMDB" id="EMD-21980"/>
<dbReference type="SMR" id="Q9NWY4"/>
<dbReference type="BioGRID" id="120306">
    <property type="interactions" value="44"/>
</dbReference>
<dbReference type="CORUM" id="Q9NWY4"/>
<dbReference type="FunCoup" id="Q9NWY4">
    <property type="interactions" value="2094"/>
</dbReference>
<dbReference type="IntAct" id="Q9NWY4">
    <property type="interactions" value="15"/>
</dbReference>
<dbReference type="MINT" id="Q9NWY4"/>
<dbReference type="STRING" id="9606.ENSP00000406598"/>
<dbReference type="GlyGen" id="Q9NWY4">
    <property type="glycosylation" value="1 site, 1 O-linked glycan (1 site)"/>
</dbReference>
<dbReference type="iPTMnet" id="Q9NWY4"/>
<dbReference type="PhosphoSitePlus" id="Q9NWY4"/>
<dbReference type="BioMuta" id="HPF1"/>
<dbReference type="DMDM" id="296434433"/>
<dbReference type="jPOST" id="Q9NWY4"/>
<dbReference type="MassIVE" id="Q9NWY4"/>
<dbReference type="PaxDb" id="9606-ENSP00000406598"/>
<dbReference type="PeptideAtlas" id="Q9NWY4"/>
<dbReference type="ProteomicsDB" id="82999"/>
<dbReference type="Pumba" id="Q9NWY4"/>
<dbReference type="Antibodypedia" id="50204">
    <property type="antibodies" value="56 antibodies from 10 providers"/>
</dbReference>
<dbReference type="DNASU" id="54969"/>
<dbReference type="Ensembl" id="ENST00000393381.3">
    <property type="protein sequence ID" value="ENSP00000406598.1"/>
    <property type="gene ID" value="ENSG00000056050.7"/>
</dbReference>
<dbReference type="GeneID" id="54969"/>
<dbReference type="KEGG" id="hsa:54969"/>
<dbReference type="MANE-Select" id="ENST00000393381.3">
    <property type="protein sequence ID" value="ENSP00000406598.1"/>
    <property type="RefSeq nucleotide sequence ID" value="NM_017867.3"/>
    <property type="RefSeq protein sequence ID" value="NP_060337.2"/>
</dbReference>
<dbReference type="UCSC" id="uc003isl.5">
    <property type="organism name" value="human"/>
</dbReference>
<dbReference type="AGR" id="HGNC:26051"/>
<dbReference type="CTD" id="54969"/>
<dbReference type="DisGeNET" id="54969"/>
<dbReference type="GeneCards" id="HPF1"/>
<dbReference type="HGNC" id="HGNC:26051">
    <property type="gene designation" value="HPF1"/>
</dbReference>
<dbReference type="HPA" id="ENSG00000056050">
    <property type="expression patterns" value="Low tissue specificity"/>
</dbReference>
<dbReference type="MIM" id="616614">
    <property type="type" value="gene"/>
</dbReference>
<dbReference type="neXtProt" id="NX_Q9NWY4"/>
<dbReference type="OpenTargets" id="ENSG00000056050"/>
<dbReference type="PharmGKB" id="PA145149735"/>
<dbReference type="VEuPathDB" id="HostDB:ENSG00000056050"/>
<dbReference type="eggNOG" id="KOG3952">
    <property type="taxonomic scope" value="Eukaryota"/>
</dbReference>
<dbReference type="GeneTree" id="ENSGT00390000014876"/>
<dbReference type="HOGENOM" id="CLU_053037_0_0_1"/>
<dbReference type="InParanoid" id="Q9NWY4"/>
<dbReference type="OMA" id="HKELHML"/>
<dbReference type="OrthoDB" id="416496at2759"/>
<dbReference type="PAN-GO" id="Q9NWY4">
    <property type="GO annotations" value="6 GO annotations based on evolutionary models"/>
</dbReference>
<dbReference type="PhylomeDB" id="Q9NWY4"/>
<dbReference type="TreeFam" id="TF317026"/>
<dbReference type="PathwayCommons" id="Q9NWY4"/>
<dbReference type="SignaLink" id="Q9NWY4"/>
<dbReference type="BioGRID-ORCS" id="54969">
    <property type="hits" value="14 hits in 1057 CRISPR screens"/>
</dbReference>
<dbReference type="ChiTaRS" id="HPF1">
    <property type="organism name" value="human"/>
</dbReference>
<dbReference type="GenomeRNAi" id="54969"/>
<dbReference type="Pharos" id="Q9NWY4">
    <property type="development level" value="Tbio"/>
</dbReference>
<dbReference type="PRO" id="PR:Q9NWY4"/>
<dbReference type="Proteomes" id="UP000005640">
    <property type="component" value="Chromosome 4"/>
</dbReference>
<dbReference type="RNAct" id="Q9NWY4">
    <property type="molecule type" value="protein"/>
</dbReference>
<dbReference type="Bgee" id="ENSG00000056050">
    <property type="expression patterns" value="Expressed in oocyte and 208 other cell types or tissues"/>
</dbReference>
<dbReference type="GO" id="GO:0000785">
    <property type="term" value="C:chromatin"/>
    <property type="evidence" value="ECO:0000314"/>
    <property type="project" value="UniProtKB"/>
</dbReference>
<dbReference type="GO" id="GO:0005634">
    <property type="term" value="C:nucleus"/>
    <property type="evidence" value="ECO:0000314"/>
    <property type="project" value="UniProtKB"/>
</dbReference>
<dbReference type="GO" id="GO:0090734">
    <property type="term" value="C:site of DNA damage"/>
    <property type="evidence" value="ECO:0000314"/>
    <property type="project" value="UniProtKB"/>
</dbReference>
<dbReference type="GO" id="GO:0003682">
    <property type="term" value="F:chromatin binding"/>
    <property type="evidence" value="ECO:0000314"/>
    <property type="project" value="UniProtKB"/>
</dbReference>
<dbReference type="GO" id="GO:0042393">
    <property type="term" value="F:histone binding"/>
    <property type="evidence" value="ECO:0000314"/>
    <property type="project" value="UniProtKB"/>
</dbReference>
<dbReference type="GO" id="GO:0072572">
    <property type="term" value="F:poly-ADP-D-ribose binding"/>
    <property type="evidence" value="ECO:0000318"/>
    <property type="project" value="GO_Central"/>
</dbReference>
<dbReference type="GO" id="GO:0140768">
    <property type="term" value="F:protein ADP-ribosyltransferase-substrate adaptor activity"/>
    <property type="evidence" value="ECO:0000314"/>
    <property type="project" value="UniProtKB"/>
</dbReference>
<dbReference type="GO" id="GO:0006974">
    <property type="term" value="P:DNA damage response"/>
    <property type="evidence" value="ECO:0000315"/>
    <property type="project" value="UniProtKB"/>
</dbReference>
<dbReference type="GO" id="GO:0006281">
    <property type="term" value="P:DNA repair"/>
    <property type="evidence" value="ECO:0000314"/>
    <property type="project" value="UniProt"/>
</dbReference>
<dbReference type="GO" id="GO:0140861">
    <property type="term" value="P:DNA repair-dependent chromatin remodeling"/>
    <property type="evidence" value="ECO:0000314"/>
    <property type="project" value="UniProtKB"/>
</dbReference>
<dbReference type="GO" id="GO:0006302">
    <property type="term" value="P:double-strand break repair"/>
    <property type="evidence" value="ECO:0000314"/>
    <property type="project" value="UniProt"/>
</dbReference>
<dbReference type="GO" id="GO:0010835">
    <property type="term" value="P:regulation of protein ADP-ribosylation"/>
    <property type="evidence" value="ECO:0000314"/>
    <property type="project" value="UniProtKB"/>
</dbReference>
<dbReference type="InterPro" id="IPR019361">
    <property type="entry name" value="HPF1"/>
</dbReference>
<dbReference type="PANTHER" id="PTHR13386">
    <property type="entry name" value="HISTONE PARYLATION FACTOR 1"/>
    <property type="match status" value="1"/>
</dbReference>
<dbReference type="PANTHER" id="PTHR13386:SF2">
    <property type="entry name" value="HISTONE PARYLATION FACTOR 1"/>
    <property type="match status" value="1"/>
</dbReference>
<dbReference type="Pfam" id="PF10228">
    <property type="entry name" value="HPF1"/>
    <property type="match status" value="1"/>
</dbReference>
<proteinExistence type="evidence at protein level"/>
<gene>
    <name evidence="24 26" type="primary">HPF1</name>
    <name evidence="24 26" type="synonym">C4orf27</name>
</gene>
<feature type="chain" id="PRO_0000294446" description="Histone PARylation factor 1">
    <location>
        <begin position="1"/>
        <end position="346"/>
    </location>
</feature>
<feature type="region of interest" description="Disordered" evidence="2">
    <location>
        <begin position="1"/>
        <end position="23"/>
    </location>
</feature>
<feature type="region of interest" description="Interaction with PARP1" evidence="6">
    <location>
        <begin position="242"/>
        <end position="346"/>
    </location>
</feature>
<feature type="active site" description="Proton donor" evidence="11 15 16">
    <location>
        <position position="284"/>
    </location>
</feature>
<feature type="modified residue" description="N-acetylmethionine" evidence="35">
    <location>
        <position position="1"/>
    </location>
</feature>
<feature type="modified residue" description="N6-acetyllysine" evidence="1">
    <location>
        <position position="19"/>
    </location>
</feature>
<feature type="modified residue" description="ADP-ribosylserine" evidence="10">
    <location>
        <position position="97"/>
    </location>
</feature>
<feature type="modified residue" description="N6-acetyllysine" evidence="34">
    <location>
        <position position="186"/>
    </location>
</feature>
<feature type="modified residue" description="N6-acetyllysine" evidence="34">
    <location>
        <position position="233"/>
    </location>
</feature>
<feature type="modified residue" description="PolyADP-ribosyl aspartic acid" evidence="15">
    <location>
        <position position="235"/>
    </location>
</feature>
<feature type="modified residue" description="ADP-ribosyltyrosine" evidence="9 10">
    <location>
        <position position="238"/>
    </location>
</feature>
<feature type="modified residue" description="PolyADP-ribosyl glutamic acid" evidence="15">
    <location>
        <position position="240"/>
    </location>
</feature>
<feature type="sequence variant" id="VAR_033183" description="In dbSNP:rs1047642." evidence="3 4 5">
    <original>R</original>
    <variation>K</variation>
    <location>
        <position position="174"/>
    </location>
</feature>
<feature type="sequence variant" id="VAR_033184" description="In dbSNP:rs1047706.">
    <original>E</original>
    <variation>D</variation>
    <location>
        <position position="331"/>
    </location>
</feature>
<feature type="mutagenesis site" description="Abolished interaction with PARP2, leading to destabilize the PARP2-nucleosome complex." evidence="12">
    <original>KK</original>
    <variation>EE</variation>
    <location>
        <begin position="149"/>
        <end position="150"/>
    </location>
</feature>
<feature type="mutagenesis site" description="Abolished interaction with PARP2, leading to destabilize the PARP2-nucleosome complex." evidence="12">
    <original>KKK</original>
    <variation>EEE</variation>
    <location>
        <begin position="179"/>
        <end position="181"/>
    </location>
</feature>
<feature type="mutagenesis site" description="Loss of ability to bind PARP1 and histones. Abolishes PARP1 ability to mediate ADP-ribosylation." evidence="6 7">
    <original>YR</original>
    <variation>AA</variation>
    <location>
        <begin position="238"/>
        <end position="239"/>
    </location>
</feature>
<feature type="mutagenesis site" description="Strongly reduced serine ADP-ribosylation by PARP1 and PARP2. Decreases PARP1 ability to mediate tyrosine ADP-ribosylation. Promotes auto-ADP-ribosylation of PARP1." evidence="10 11 15">
    <original>R</original>
    <variation>A</variation>
    <location>
        <position position="239"/>
    </location>
</feature>
<feature type="mutagenesis site" description="Does not affect serine ADP-ribosylation by PARP1 and PARP2." evidence="11">
    <original>E</original>
    <variation>A</variation>
    <location>
        <position position="243"/>
    </location>
</feature>
<feature type="mutagenesis site" description="Promotes auto-ADP-ribosylation of PARP1. Abolished interaction with PARP1." evidence="15">
    <original>F</original>
    <variation>S</variation>
    <location>
        <position position="268"/>
    </location>
</feature>
<feature type="mutagenesis site" description="Promotes auto-ADP-ribosylation of PARP1." evidence="15">
    <original>F</original>
    <variation>A</variation>
    <location>
        <position position="280"/>
    </location>
</feature>
<feature type="mutagenesis site" description="Strongly reduced serine ADP-ribosylation by PARP1 and PARP2." evidence="11 16">
    <original>D</original>
    <variation>A</variation>
    <location>
        <position position="283"/>
    </location>
</feature>
<feature type="mutagenesis site" description="Promotes auto-ADP-ribosylation of PARP1. Abolished interaction with PARP1." evidence="15">
    <original>D</original>
    <variation>H</variation>
    <location>
        <position position="283"/>
    </location>
</feature>
<feature type="mutagenesis site" description="Abolished serine ADP-ribosylation by PARP1 and PARP2." evidence="11 15 16">
    <original>E</original>
    <variation>A</variation>
    <location>
        <position position="284"/>
    </location>
</feature>
<feature type="mutagenesis site" description="Promotes auto-ADP-ribosylation of PARP1." evidence="15">
    <original>C</original>
    <variation>H</variation>
    <location>
        <position position="285"/>
    </location>
</feature>
<feature type="mutagenesis site" description="Strongly reduced serine ADP-ribosylation by PARP1 and PARP2." evidence="11">
    <original>D</original>
    <variation>A</variation>
    <location>
        <position position="286"/>
    </location>
</feature>
<feature type="mutagenesis site" description="Does not affect serine ADP-ribosylation of histones." evidence="16">
    <original>E</original>
    <variation>A</variation>
    <location>
        <position position="292"/>
    </location>
</feature>
<feature type="mutagenesis site" description="Does not affect serine ADP-ribosylation of histones." evidence="16">
    <original>H</original>
    <variation>Q</variation>
    <location>
        <position position="303"/>
    </location>
</feature>
<feature type="mutagenesis site" description="Promotes auto-ADP-ribosylation of PARP1." evidence="15">
    <original>K</original>
    <variation>S</variation>
    <location>
        <position position="307"/>
    </location>
</feature>
<feature type="helix" evidence="36">
    <location>
        <begin position="36"/>
        <end position="45"/>
    </location>
</feature>
<feature type="helix" evidence="36">
    <location>
        <begin position="51"/>
        <end position="63"/>
    </location>
</feature>
<feature type="strand" evidence="38">
    <location>
        <begin position="65"/>
        <end position="67"/>
    </location>
</feature>
<feature type="helix" evidence="36">
    <location>
        <begin position="68"/>
        <end position="70"/>
    </location>
</feature>
<feature type="helix" evidence="36">
    <location>
        <begin position="73"/>
        <end position="76"/>
    </location>
</feature>
<feature type="helix" evidence="36">
    <location>
        <begin position="83"/>
        <end position="87"/>
    </location>
</feature>
<feature type="turn" evidence="36">
    <location>
        <begin position="88"/>
        <end position="91"/>
    </location>
</feature>
<feature type="turn" evidence="37">
    <location>
        <begin position="96"/>
        <end position="99"/>
    </location>
</feature>
<feature type="strand" evidence="36">
    <location>
        <begin position="115"/>
        <end position="120"/>
    </location>
</feature>
<feature type="turn" evidence="36">
    <location>
        <begin position="123"/>
        <end position="126"/>
    </location>
</feature>
<feature type="strand" evidence="36">
    <location>
        <begin position="127"/>
        <end position="132"/>
    </location>
</feature>
<feature type="strand" evidence="36">
    <location>
        <begin position="141"/>
        <end position="147"/>
    </location>
</feature>
<feature type="turn" evidence="36">
    <location>
        <begin position="148"/>
        <end position="150"/>
    </location>
</feature>
<feature type="helix" evidence="36">
    <location>
        <begin position="161"/>
        <end position="173"/>
    </location>
</feature>
<feature type="helix" evidence="36">
    <location>
        <begin position="179"/>
        <end position="199"/>
    </location>
</feature>
<feature type="helix" evidence="36">
    <location>
        <begin position="208"/>
        <end position="214"/>
    </location>
</feature>
<feature type="turn" evidence="36">
    <location>
        <begin position="221"/>
        <end position="223"/>
    </location>
</feature>
<feature type="helix" evidence="36">
    <location>
        <begin position="245"/>
        <end position="256"/>
    </location>
</feature>
<feature type="helix" evidence="36">
    <location>
        <begin position="261"/>
        <end position="267"/>
    </location>
</feature>
<feature type="helix" evidence="36">
    <location>
        <begin position="269"/>
        <end position="283"/>
    </location>
</feature>
<feature type="helix" evidence="36">
    <location>
        <begin position="288"/>
        <end position="300"/>
    </location>
</feature>
<feature type="helix" evidence="36">
    <location>
        <begin position="303"/>
        <end position="305"/>
    </location>
</feature>
<feature type="helix" evidence="36">
    <location>
        <begin position="306"/>
        <end position="319"/>
    </location>
</feature>
<feature type="helix" evidence="36">
    <location>
        <begin position="323"/>
        <end position="334"/>
    </location>
</feature>
<accession>Q9NWY4</accession>
<organism>
    <name type="scientific">Homo sapiens</name>
    <name type="common">Human</name>
    <dbReference type="NCBI Taxonomy" id="9606"/>
    <lineage>
        <taxon>Eukaryota</taxon>
        <taxon>Metazoa</taxon>
        <taxon>Chordata</taxon>
        <taxon>Craniata</taxon>
        <taxon>Vertebrata</taxon>
        <taxon>Euteleostomi</taxon>
        <taxon>Mammalia</taxon>
        <taxon>Eutheria</taxon>
        <taxon>Euarchontoglires</taxon>
        <taxon>Primates</taxon>
        <taxon>Haplorrhini</taxon>
        <taxon>Catarrhini</taxon>
        <taxon>Hominidae</taxon>
        <taxon>Homo</taxon>
    </lineage>
</organism>